<sequence>MTRYYCEYCHSYLTHDTLSVRKSHLVGKNHLRITADYYRNKARDIINKHNHKRRHIGKRGRKERENSSQNETLKVTCLSNKEKRHIMHVKKMNQKELAQTSIDTLKLLYDGSPGYSKVFVDANRFDIGDLVKASKLPQRANEKSAHHSFKQTSRSRDETCESNPFPRLNNPKKLEPPKILSQWSNTIPKTSIFYSVDILQTTIKESKKRMHSDGIRKPSSANGYKRRRYGN</sequence>
<evidence type="ECO:0000255" key="1">
    <source>
        <dbReference type="HAMAP-Rule" id="MF_03153"/>
    </source>
</evidence>
<evidence type="ECO:0000256" key="2">
    <source>
        <dbReference type="SAM" id="MobiDB-lite"/>
    </source>
</evidence>
<evidence type="ECO:0000269" key="3">
    <source>
    </source>
</evidence>
<evidence type="ECO:0000269" key="4">
    <source>
    </source>
</evidence>
<evidence type="ECO:0000269" key="5">
    <source>
    </source>
</evidence>
<evidence type="ECO:0000269" key="6">
    <source>
    </source>
</evidence>
<evidence type="ECO:0000269" key="7">
    <source>
    </source>
</evidence>
<evidence type="ECO:0000269" key="8">
    <source>
    </source>
</evidence>
<evidence type="ECO:0000269" key="9">
    <source>
    </source>
</evidence>
<evidence type="ECO:0000269" key="10">
    <source>
    </source>
</evidence>
<evidence type="ECO:0000269" key="11">
    <source>
    </source>
</evidence>
<evidence type="ECO:0007829" key="12">
    <source>
        <dbReference type="PDB" id="5ZWN"/>
    </source>
</evidence>
<evidence type="ECO:0007829" key="13">
    <source>
        <dbReference type="PDB" id="6N7R"/>
    </source>
</evidence>
<evidence type="ECO:0007829" key="14">
    <source>
        <dbReference type="PDB" id="8W2O"/>
    </source>
</evidence>
<keyword id="KW-0002">3D-structure</keyword>
<keyword id="KW-0903">Direct protein sequencing</keyword>
<keyword id="KW-0479">Metal-binding</keyword>
<keyword id="KW-0539">Nucleus</keyword>
<keyword id="KW-1185">Reference proteome</keyword>
<keyword id="KW-0687">Ribonucleoprotein</keyword>
<keyword id="KW-0694">RNA-binding</keyword>
<keyword id="KW-0862">Zinc</keyword>
<keyword id="KW-0863">Zinc-finger</keyword>
<name>RU1C_YEAST</name>
<organism>
    <name type="scientific">Saccharomyces cerevisiae (strain ATCC 204508 / S288c)</name>
    <name type="common">Baker's yeast</name>
    <dbReference type="NCBI Taxonomy" id="559292"/>
    <lineage>
        <taxon>Eukaryota</taxon>
        <taxon>Fungi</taxon>
        <taxon>Dikarya</taxon>
        <taxon>Ascomycota</taxon>
        <taxon>Saccharomycotina</taxon>
        <taxon>Saccharomycetes</taxon>
        <taxon>Saccharomycetales</taxon>
        <taxon>Saccharomycetaceae</taxon>
        <taxon>Saccharomyces</taxon>
    </lineage>
</organism>
<feature type="chain" id="PRO_0000097528" description="U1 small nuclear ribonucleoprotein C">
    <location>
        <begin position="1"/>
        <end position="231"/>
    </location>
</feature>
<feature type="zinc finger region" description="Matrin-type" evidence="1">
    <location>
        <begin position="4"/>
        <end position="36"/>
    </location>
</feature>
<feature type="region of interest" description="Disordered" evidence="2">
    <location>
        <begin position="49"/>
        <end position="71"/>
    </location>
</feature>
<feature type="region of interest" description="Disordered" evidence="2">
    <location>
        <begin position="137"/>
        <end position="177"/>
    </location>
</feature>
<feature type="region of interest" description="Disordered" evidence="2">
    <location>
        <begin position="205"/>
        <end position="231"/>
    </location>
</feature>
<feature type="compositionally biased region" description="Basic residues" evidence="2">
    <location>
        <begin position="49"/>
        <end position="61"/>
    </location>
</feature>
<feature type="mutagenesis site" description="Gives rise to unstable commitment complexes." evidence="4 8">
    <original>L</original>
    <variation>A</variation>
    <variation>D</variation>
    <variation>E</variation>
    <variation>F</variation>
    <variation>G</variation>
    <variation>H</variation>
    <variation>K</variation>
    <variation>P</variation>
    <variation>R</variation>
    <variation>S</variation>
    <variation>T</variation>
    <variation>W</variation>
    <variation>Y</variation>
    <location>
        <position position="13"/>
    </location>
</feature>
<feature type="mutagenesis site" description="No effect." evidence="4 8">
    <original>L</original>
    <variation>C</variation>
    <variation>I</variation>
    <variation>M</variation>
    <variation>N</variation>
    <variation>Q</variation>
    <variation>V</variation>
    <location>
        <position position="13"/>
    </location>
</feature>
<feature type="strand" evidence="13">
    <location>
        <begin position="4"/>
        <end position="6"/>
    </location>
</feature>
<feature type="turn" evidence="13">
    <location>
        <begin position="7"/>
        <end position="10"/>
    </location>
</feature>
<feature type="strand" evidence="13">
    <location>
        <begin position="11"/>
        <end position="15"/>
    </location>
</feature>
<feature type="helix" evidence="13">
    <location>
        <begin position="18"/>
        <end position="25"/>
    </location>
</feature>
<feature type="helix" evidence="13">
    <location>
        <begin position="28"/>
        <end position="47"/>
    </location>
</feature>
<feature type="helix" evidence="13">
    <location>
        <begin position="61"/>
        <end position="69"/>
    </location>
</feature>
<feature type="helix" evidence="13">
    <location>
        <begin position="80"/>
        <end position="98"/>
    </location>
</feature>
<feature type="helix" evidence="13">
    <location>
        <begin position="105"/>
        <end position="108"/>
    </location>
</feature>
<feature type="turn" evidence="13">
    <location>
        <begin position="109"/>
        <end position="111"/>
    </location>
</feature>
<feature type="helix" evidence="13">
    <location>
        <begin position="115"/>
        <end position="117"/>
    </location>
</feature>
<feature type="strand" evidence="13">
    <location>
        <begin position="119"/>
        <end position="123"/>
    </location>
</feature>
<feature type="strand" evidence="13">
    <location>
        <begin position="125"/>
        <end position="127"/>
    </location>
</feature>
<feature type="helix" evidence="13">
    <location>
        <begin position="128"/>
        <end position="133"/>
    </location>
</feature>
<feature type="helix" evidence="13">
    <location>
        <begin position="142"/>
        <end position="146"/>
    </location>
</feature>
<feature type="strand" evidence="13">
    <location>
        <begin position="162"/>
        <end position="165"/>
    </location>
</feature>
<feature type="turn" evidence="14">
    <location>
        <begin position="166"/>
        <end position="169"/>
    </location>
</feature>
<feature type="helix" evidence="13">
    <location>
        <begin position="181"/>
        <end position="183"/>
    </location>
</feature>
<feature type="helix" evidence="12">
    <location>
        <begin position="184"/>
        <end position="186"/>
    </location>
</feature>
<proteinExistence type="evidence at protein level"/>
<accession>Q05900</accession>
<accession>D6VYU2</accession>
<reference key="1">
    <citation type="journal article" date="1997" name="Nature">
        <title>The nucleotide sequence of Saccharomyces cerevisiae chromosome XII.</title>
        <authorList>
            <person name="Johnston M."/>
            <person name="Hillier L.W."/>
            <person name="Riles L."/>
            <person name="Albermann K."/>
            <person name="Andre B."/>
            <person name="Ansorge W."/>
            <person name="Benes V."/>
            <person name="Brueckner M."/>
            <person name="Delius H."/>
            <person name="Dubois E."/>
            <person name="Duesterhoeft A."/>
            <person name="Entian K.-D."/>
            <person name="Floeth M."/>
            <person name="Goffeau A."/>
            <person name="Hebling U."/>
            <person name="Heumann K."/>
            <person name="Heuss-Neitzel D."/>
            <person name="Hilbert H."/>
            <person name="Hilger F."/>
            <person name="Kleine K."/>
            <person name="Koetter P."/>
            <person name="Louis E.J."/>
            <person name="Messenguy F."/>
            <person name="Mewes H.-W."/>
            <person name="Miosga T."/>
            <person name="Moestl D."/>
            <person name="Mueller-Auer S."/>
            <person name="Nentwich U."/>
            <person name="Obermaier B."/>
            <person name="Piravandi E."/>
            <person name="Pohl T.M."/>
            <person name="Portetelle D."/>
            <person name="Purnelle B."/>
            <person name="Rechmann S."/>
            <person name="Rieger M."/>
            <person name="Rinke M."/>
            <person name="Rose M."/>
            <person name="Scharfe M."/>
            <person name="Scherens B."/>
            <person name="Scholler P."/>
            <person name="Schwager C."/>
            <person name="Schwarz S."/>
            <person name="Underwood A.P."/>
            <person name="Urrestarazu L.A."/>
            <person name="Vandenbol M."/>
            <person name="Verhasselt P."/>
            <person name="Vierendeels F."/>
            <person name="Voet M."/>
            <person name="Volckaert G."/>
            <person name="Voss H."/>
            <person name="Wambutt R."/>
            <person name="Wedler E."/>
            <person name="Wedler H."/>
            <person name="Zimmermann F.K."/>
            <person name="Zollner A."/>
            <person name="Hani J."/>
            <person name="Hoheisel J.D."/>
        </authorList>
    </citation>
    <scope>NUCLEOTIDE SEQUENCE [LARGE SCALE GENOMIC DNA]</scope>
    <source>
        <strain>ATCC 204508 / S288c</strain>
    </source>
</reference>
<reference key="2">
    <citation type="journal article" date="2014" name="G3 (Bethesda)">
        <title>The reference genome sequence of Saccharomyces cerevisiae: Then and now.</title>
        <authorList>
            <person name="Engel S.R."/>
            <person name="Dietrich F.S."/>
            <person name="Fisk D.G."/>
            <person name="Binkley G."/>
            <person name="Balakrishnan R."/>
            <person name="Costanzo M.C."/>
            <person name="Dwight S.S."/>
            <person name="Hitz B.C."/>
            <person name="Karra K."/>
            <person name="Nash R.S."/>
            <person name="Weng S."/>
            <person name="Wong E.D."/>
            <person name="Lloyd P."/>
            <person name="Skrzypek M.S."/>
            <person name="Miyasato S.R."/>
            <person name="Simison M."/>
            <person name="Cherry J.M."/>
        </authorList>
    </citation>
    <scope>GENOME REANNOTATION</scope>
    <source>
        <strain>ATCC 204508 / S288c</strain>
    </source>
</reference>
<reference key="3">
    <citation type="journal article" date="2007" name="Genome Res.">
        <title>Approaching a complete repository of sequence-verified protein-encoding clones for Saccharomyces cerevisiae.</title>
        <authorList>
            <person name="Hu Y."/>
            <person name="Rolfs A."/>
            <person name="Bhullar B."/>
            <person name="Murthy T.V.S."/>
            <person name="Zhu C."/>
            <person name="Berger M.F."/>
            <person name="Camargo A.A."/>
            <person name="Kelley F."/>
            <person name="McCarron S."/>
            <person name="Jepson D."/>
            <person name="Richardson A."/>
            <person name="Raphael J."/>
            <person name="Moreira D."/>
            <person name="Taycher E."/>
            <person name="Zuo D."/>
            <person name="Mohr S."/>
            <person name="Kane M.F."/>
            <person name="Williamson J."/>
            <person name="Simpson A.J.G."/>
            <person name="Bulyk M.L."/>
            <person name="Harlow E."/>
            <person name="Marsischky G."/>
            <person name="Kolodner R.D."/>
            <person name="LaBaer J."/>
        </authorList>
    </citation>
    <scope>NUCLEOTIDE SEQUENCE [GENOMIC DNA]</scope>
    <source>
        <strain>ATCC 204508 / S288c</strain>
    </source>
</reference>
<reference key="4">
    <citation type="journal article" date="1997" name="Proc. Natl. Acad. Sci. U.S.A.">
        <title>Identification of the proteins of the yeast U1 small nuclear ribonucleoprotein complex by mass spectrometry.</title>
        <authorList>
            <person name="Neubauer G."/>
            <person name="Gottschalk A."/>
            <person name="Fabrizio P."/>
            <person name="Seraphin B."/>
            <person name="Luehrmann R."/>
            <person name="Mann M."/>
        </authorList>
    </citation>
    <scope>IDENTIFICATION</scope>
    <scope>PARTIAL PROTEIN SEQUENCE</scope>
</reference>
<reference key="5">
    <citation type="journal article" date="1997" name="EMBO J.">
        <title>Identification and characterization of a yeast homolog of U1 snRNP-specific protein C.</title>
        <authorList>
            <person name="Tang J."/>
            <person name="Abovich N."/>
            <person name="Fleming M.L."/>
            <person name="Seraphin B."/>
            <person name="Rosbash M."/>
        </authorList>
    </citation>
    <scope>FUNCTION</scope>
</reference>
<reference key="6">
    <citation type="journal article" date="1998" name="RNA">
        <title>A comprehensive biochemical and genetic analysis of the yeast U1 snRNP reveals five novel proteins.</title>
        <authorList>
            <person name="Gottschalk A."/>
            <person name="Tang J."/>
            <person name="Puig O."/>
            <person name="Salgado J."/>
            <person name="Neubauer G."/>
            <person name="Colot H.V."/>
            <person name="Mann M."/>
            <person name="Seraphin B."/>
            <person name="Rosbash M."/>
            <person name="Luehrmann R."/>
            <person name="Fabrizio P."/>
        </authorList>
    </citation>
    <scope>IDENTIFICATION IN THE U1 SNRNP COMPLEX</scope>
    <scope>IDENTIFICATION BY MASS SPECTROMETRY</scope>
</reference>
<reference key="7">
    <citation type="journal article" date="1999" name="Genes Dev.">
        <title>Identification of eight proteins that cross-link to pre-mRNA in the yeast commitment complex.</title>
        <authorList>
            <person name="Zhang D."/>
            <person name="Rosbash M."/>
        </authorList>
    </citation>
    <scope>FUNCTION</scope>
    <scope>SUBUNIT</scope>
</reference>
<reference key="8">
    <citation type="journal article" date="2001" name="Mol. Cell">
        <title>Specific alterations of U1-C protein or U1 small nuclear RNA can eliminate the requirement of Prp28p, an essential DEAD box splicing factor.</title>
        <authorList>
            <person name="Chen J.Y.-F."/>
            <person name="Stands L."/>
            <person name="Staley J.P."/>
            <person name="Jackups R.R. Jr."/>
            <person name="Latus L.J."/>
            <person name="Chang T.-H."/>
        </authorList>
    </citation>
    <scope>MUTAGENESIS OF LEU-13</scope>
</reference>
<reference key="9">
    <citation type="journal article" date="2002" name="Nature">
        <title>The U1 snRNP protein U1C recognizes the 5' splice site in the absence of base pairing.</title>
        <authorList>
            <person name="Du H."/>
            <person name="Rosbash M."/>
        </authorList>
    </citation>
    <scope>FUNCTION</scope>
</reference>
<reference key="10">
    <citation type="journal article" date="2003" name="Nature">
        <title>Global analysis of protein localization in budding yeast.</title>
        <authorList>
            <person name="Huh W.-K."/>
            <person name="Falvo J.V."/>
            <person name="Gerke L.C."/>
            <person name="Carroll A.S."/>
            <person name="Howson R.W."/>
            <person name="Weissman J.S."/>
            <person name="O'Shea E.K."/>
        </authorList>
    </citation>
    <scope>SUBCELLULAR LOCATION [LARGE SCALE ANALYSIS]</scope>
</reference>
<reference key="11">
    <citation type="journal article" date="2003" name="Nature">
        <title>Global analysis of protein expression in yeast.</title>
        <authorList>
            <person name="Ghaemmaghami S."/>
            <person name="Huh W.-K."/>
            <person name="Bower K."/>
            <person name="Howson R.W."/>
            <person name="Belle A."/>
            <person name="Dephoure N."/>
            <person name="O'Shea E.K."/>
            <person name="Weissman J.S."/>
        </authorList>
    </citation>
    <scope>LEVEL OF PROTEIN EXPRESSION [LARGE SCALE ANALYSIS]</scope>
</reference>
<reference key="12">
    <citation type="journal article" date="2004" name="Proc. Natl. Acad. Sci. U.S.A.">
        <title>Effects of the U1C L13 mutation and temperature regulation of yeast commitment complex formation.</title>
        <authorList>
            <person name="Du H."/>
            <person name="Tardiff D.F."/>
            <person name="Moore M.J."/>
            <person name="Rosbash M."/>
        </authorList>
    </citation>
    <scope>MUTAGENESIS OF LEU-13</scope>
</reference>
<reference key="13">
    <citation type="journal article" date="2009" name="Mol. Cell">
        <title>The evolutionarily conserved core design of the catalytic activation step of the yeast spliceosome.</title>
        <authorList>
            <person name="Fabrizio P."/>
            <person name="Dannenberg J."/>
            <person name="Dube P."/>
            <person name="Kastner B."/>
            <person name="Stark H."/>
            <person name="Urlaub H."/>
            <person name="Luhrmann R."/>
        </authorList>
    </citation>
    <scope>IDENTIFICATION IN THE U1 SNRNP COMPLEX</scope>
    <scope>IDENTIFICATION BY MASS SPECTROMETRY</scope>
</reference>
<protein>
    <recommendedName>
        <fullName evidence="1">U1 small nuclear ribonucleoprotein C</fullName>
        <shortName evidence="1">U1 snRNP C</shortName>
        <shortName evidence="1">U1-C</shortName>
        <shortName evidence="1">U1C</shortName>
    </recommendedName>
</protein>
<comment type="function">
    <text evidence="3 5 10">Component of the spliceosomal U1 snRNP, which is essential for recognition of the pre-mRNA 5' splice-site and the subsequent assembly of the spliceosome. YHC1/U1-C is directly involved in initial 5' splice-site recognition for both constitutive and regulated alternative splicing. The interaction with the 5' splice-site seems to precede base-pairing between the pre-mRNA and the U1 snRNA. Stimulates commitment or early (E) complex formation by stabilizing the base pairing of the 5' end of the U1 snRNA and the 5' splice-site region.</text>
</comment>
<comment type="subunit">
    <text evidence="3 9 11">U1 snRNP is composed of the 7 core Sm proteins SMB1, SMD1, SMD2, SMD3, SME1, SMX3 and SMX2 (Sm proteins B, D1, D2, D3, E, F and G, respectively) that assemble in a heptameric protein ring on the Sm site of the small nuclear RNA to form the core snRNP, and at least 10 U1 snRNP-specific proteins SNP1/U1-70K, MUD1/U1-A, YHC1/U1-C, LUC7, NAM8, PRP39, PRP40, PRP42, SNU56 and SNU71. YHC1/U1-C interacts with U1 snRNA and the 5' splice-site region of the pre-mRNA.</text>
</comment>
<comment type="subcellular location">
    <subcellularLocation>
        <location evidence="1 6">Nucleus</location>
    </subcellularLocation>
</comment>
<comment type="miscellaneous">
    <text evidence="7">Present with 2140 molecules/cell in log phase SD medium.</text>
</comment>
<comment type="similarity">
    <text evidence="1">Belongs to the U1 small nuclear ribonucleoprotein C family.</text>
</comment>
<dbReference type="EMBL" id="U17243">
    <property type="protein sequence ID" value="AAB67343.1"/>
    <property type="molecule type" value="Genomic_DNA"/>
</dbReference>
<dbReference type="EMBL" id="AY692761">
    <property type="protein sequence ID" value="AAT92780.1"/>
    <property type="molecule type" value="Genomic_DNA"/>
</dbReference>
<dbReference type="EMBL" id="BK006945">
    <property type="protein sequence ID" value="DAA09608.1"/>
    <property type="molecule type" value="Genomic_DNA"/>
</dbReference>
<dbReference type="PIR" id="S50382">
    <property type="entry name" value="S50382"/>
</dbReference>
<dbReference type="RefSeq" id="NP_013401.1">
    <property type="nucleotide sequence ID" value="NM_001182186.1"/>
</dbReference>
<dbReference type="PDB" id="5ZWN">
    <property type="method" value="EM"/>
    <property type="resolution" value="3.30 A"/>
    <property type="chains" value="R=1-231"/>
</dbReference>
<dbReference type="PDB" id="6G90">
    <property type="method" value="EM"/>
    <property type="resolution" value="4.00 A"/>
    <property type="chains" value="C=1-231"/>
</dbReference>
<dbReference type="PDB" id="6N7P">
    <property type="method" value="EM"/>
    <property type="resolution" value="3.60 A"/>
    <property type="chains" value="B=1-231"/>
</dbReference>
<dbReference type="PDB" id="6N7R">
    <property type="method" value="EM"/>
    <property type="resolution" value="3.20 A"/>
    <property type="chains" value="B=1-231"/>
</dbReference>
<dbReference type="PDB" id="6N7X">
    <property type="method" value="EM"/>
    <property type="resolution" value="3.60 A"/>
    <property type="chains" value="B=1-231"/>
</dbReference>
<dbReference type="PDB" id="7OQC">
    <property type="method" value="EM"/>
    <property type="resolution" value="4.10 A"/>
    <property type="chains" value="C=1-231"/>
</dbReference>
<dbReference type="PDB" id="7OQE">
    <property type="method" value="EM"/>
    <property type="resolution" value="5.90 A"/>
    <property type="chains" value="C=1-231"/>
</dbReference>
<dbReference type="PDB" id="8W2O">
    <property type="method" value="EM"/>
    <property type="resolution" value="3.49 A"/>
    <property type="chains" value="B=1-231"/>
</dbReference>
<dbReference type="PDBsum" id="5ZWN"/>
<dbReference type="PDBsum" id="6G90"/>
<dbReference type="PDBsum" id="6N7P"/>
<dbReference type="PDBsum" id="6N7R"/>
<dbReference type="PDBsum" id="6N7X"/>
<dbReference type="PDBsum" id="7OQC"/>
<dbReference type="PDBsum" id="7OQE"/>
<dbReference type="PDBsum" id="8W2O"/>
<dbReference type="EMDB" id="EMD-0360"/>
<dbReference type="EMDB" id="EMD-0361"/>
<dbReference type="EMDB" id="EMD-13029"/>
<dbReference type="EMDB" id="EMD-13033"/>
<dbReference type="EMDB" id="EMD-4364"/>
<dbReference type="EMDB" id="EMD-43753"/>
<dbReference type="EMDB" id="EMD-6973"/>
<dbReference type="EMDB" id="EMD-8622"/>
<dbReference type="SMR" id="Q05900"/>
<dbReference type="BioGRID" id="31562">
    <property type="interactions" value="780"/>
</dbReference>
<dbReference type="ComplexPortal" id="CPX-23">
    <property type="entry name" value="U1 small nuclear ribonucleoprotein complex"/>
</dbReference>
<dbReference type="DIP" id="DIP-6661N"/>
<dbReference type="FunCoup" id="Q05900">
    <property type="interactions" value="214"/>
</dbReference>
<dbReference type="IntAct" id="Q05900">
    <property type="interactions" value="24"/>
</dbReference>
<dbReference type="MINT" id="Q05900"/>
<dbReference type="STRING" id="4932.YLR298C"/>
<dbReference type="iPTMnet" id="Q05900"/>
<dbReference type="PaxDb" id="4932-YLR298C"/>
<dbReference type="PeptideAtlas" id="Q05900"/>
<dbReference type="EnsemblFungi" id="YLR298C_mRNA">
    <property type="protein sequence ID" value="YLR298C"/>
    <property type="gene ID" value="YLR298C"/>
</dbReference>
<dbReference type="GeneID" id="851005"/>
<dbReference type="KEGG" id="sce:YLR298C"/>
<dbReference type="AGR" id="SGD:S000004289"/>
<dbReference type="SGD" id="S000004289">
    <property type="gene designation" value="YHC1"/>
</dbReference>
<dbReference type="VEuPathDB" id="FungiDB:YLR298C"/>
<dbReference type="eggNOG" id="KOG3454">
    <property type="taxonomic scope" value="Eukaryota"/>
</dbReference>
<dbReference type="HOGENOM" id="CLU_104749_0_0_1"/>
<dbReference type="InParanoid" id="Q05900"/>
<dbReference type="OMA" id="HSYLTHD"/>
<dbReference type="OrthoDB" id="76567at2759"/>
<dbReference type="BioCyc" id="YEAST:G3O-32391-MONOMER"/>
<dbReference type="BioGRID-ORCS" id="851005">
    <property type="hits" value="6 hits in 10 CRISPR screens"/>
</dbReference>
<dbReference type="ChiTaRS" id="YHC1">
    <property type="organism name" value="yeast"/>
</dbReference>
<dbReference type="PRO" id="PR:Q05900"/>
<dbReference type="Proteomes" id="UP000002311">
    <property type="component" value="Chromosome XII"/>
</dbReference>
<dbReference type="RNAct" id="Q05900">
    <property type="molecule type" value="protein"/>
</dbReference>
<dbReference type="GO" id="GO:0000243">
    <property type="term" value="C:commitment complex"/>
    <property type="evidence" value="ECO:0000353"/>
    <property type="project" value="SGD"/>
</dbReference>
<dbReference type="GO" id="GO:0005634">
    <property type="term" value="C:nucleus"/>
    <property type="evidence" value="ECO:0000303"/>
    <property type="project" value="ComplexPortal"/>
</dbReference>
<dbReference type="GO" id="GO:0005681">
    <property type="term" value="C:spliceosomal complex"/>
    <property type="evidence" value="ECO:0000303"/>
    <property type="project" value="ComplexPortal"/>
</dbReference>
<dbReference type="GO" id="GO:0005685">
    <property type="term" value="C:U1 snRNP"/>
    <property type="evidence" value="ECO:0000314"/>
    <property type="project" value="SGD"/>
</dbReference>
<dbReference type="GO" id="GO:0071004">
    <property type="term" value="C:U2-type prespliceosome"/>
    <property type="evidence" value="ECO:0000314"/>
    <property type="project" value="SGD"/>
</dbReference>
<dbReference type="GO" id="GO:0003729">
    <property type="term" value="F:mRNA binding"/>
    <property type="evidence" value="ECO:0000353"/>
    <property type="project" value="SGD"/>
</dbReference>
<dbReference type="GO" id="GO:0030627">
    <property type="term" value="F:pre-mRNA 5'-splice site binding"/>
    <property type="evidence" value="ECO:0000314"/>
    <property type="project" value="SGD"/>
</dbReference>
<dbReference type="GO" id="GO:0030619">
    <property type="term" value="F:U1 snRNA binding"/>
    <property type="evidence" value="ECO:0007669"/>
    <property type="project" value="UniProtKB-UniRule"/>
</dbReference>
<dbReference type="GO" id="GO:0008270">
    <property type="term" value="F:zinc ion binding"/>
    <property type="evidence" value="ECO:0007669"/>
    <property type="project" value="UniProtKB-UniRule"/>
</dbReference>
<dbReference type="GO" id="GO:0000395">
    <property type="term" value="P:mRNA 5'-splice site recognition"/>
    <property type="evidence" value="ECO:0000315"/>
    <property type="project" value="SGD"/>
</dbReference>
<dbReference type="GO" id="GO:0000398">
    <property type="term" value="P:mRNA splicing, via spliceosome"/>
    <property type="evidence" value="ECO:0000353"/>
    <property type="project" value="SGD"/>
</dbReference>
<dbReference type="GO" id="GO:0000387">
    <property type="term" value="P:spliceosomal snRNP assembly"/>
    <property type="evidence" value="ECO:0007669"/>
    <property type="project" value="UniProtKB-UniRule"/>
</dbReference>
<dbReference type="Gene3D" id="3.30.160.60">
    <property type="entry name" value="Classic Zinc Finger"/>
    <property type="match status" value="1"/>
</dbReference>
<dbReference type="HAMAP" id="MF_03153">
    <property type="entry name" value="U1_C"/>
    <property type="match status" value="1"/>
</dbReference>
<dbReference type="InterPro" id="IPR000690">
    <property type="entry name" value="Matrin/U1-C_Znf_C2H2"/>
</dbReference>
<dbReference type="InterPro" id="IPR003604">
    <property type="entry name" value="Matrin/U1-like-C_Znf_C2H2"/>
</dbReference>
<dbReference type="InterPro" id="IPR013085">
    <property type="entry name" value="U1-CZ_Znf_C2H2"/>
</dbReference>
<dbReference type="InterPro" id="IPR017340">
    <property type="entry name" value="U1_snRNP-C"/>
</dbReference>
<dbReference type="InterPro" id="IPR036236">
    <property type="entry name" value="Znf_C2H2_sf"/>
</dbReference>
<dbReference type="PANTHER" id="PTHR31148">
    <property type="entry name" value="U1 SMALL NUCLEAR RIBONUCLEOPROTEIN C"/>
    <property type="match status" value="1"/>
</dbReference>
<dbReference type="PANTHER" id="PTHR31148:SF1">
    <property type="entry name" value="U1 SMALL NUCLEAR RIBONUCLEOPROTEIN C"/>
    <property type="match status" value="1"/>
</dbReference>
<dbReference type="Pfam" id="PF06220">
    <property type="entry name" value="zf-U1"/>
    <property type="match status" value="1"/>
</dbReference>
<dbReference type="SMART" id="SM00451">
    <property type="entry name" value="ZnF_U1"/>
    <property type="match status" value="1"/>
</dbReference>
<dbReference type="SUPFAM" id="SSF57667">
    <property type="entry name" value="beta-beta-alpha zinc fingers"/>
    <property type="match status" value="1"/>
</dbReference>
<dbReference type="PROSITE" id="PS50171">
    <property type="entry name" value="ZF_MATRIN"/>
    <property type="match status" value="1"/>
</dbReference>
<gene>
    <name evidence="1" type="primary">YHC1</name>
    <name type="ordered locus">YLR298C</name>
    <name type="ORF">L8003.21</name>
</gene>